<name>DPOL_GAHVM</name>
<feature type="chain" id="PRO_0000406418" description="DNA polymerase catalytic subunit">
    <location>
        <begin position="1"/>
        <end position="1220"/>
    </location>
</feature>
<organism>
    <name type="scientific">Gallid herpesvirus 2 (strain Chicken/Md5/ATCC VR-987)</name>
    <name type="common">GaHV-2</name>
    <name type="synonym">Marek's disease herpesvirus type 1</name>
    <dbReference type="NCBI Taxonomy" id="10389"/>
    <lineage>
        <taxon>Viruses</taxon>
        <taxon>Duplodnaviria</taxon>
        <taxon>Heunggongvirae</taxon>
        <taxon>Peploviricota</taxon>
        <taxon>Herviviricetes</taxon>
        <taxon>Herpesvirales</taxon>
        <taxon>Orthoherpesviridae</taxon>
        <taxon>Alphaherpesvirinae</taxon>
        <taxon>Mardivirus</taxon>
        <taxon>Mardivirus gallidalpha2</taxon>
        <taxon>Gallid alphaherpesvirus 2</taxon>
    </lineage>
</organism>
<sequence>MSVDGTKTFFNPYIGARKRSLEARNGLSFSTGQNYDEKNNRRDRNSITYVTTIDEFKYIAPKCLDDKDVKQKGTHIGKLKRSPVLYKNGEEYVFLNFEDCEDVWPRRCSIWNNRSFLPADFDPRFSRFHVYDMIETVEFASAAIDRDKNRFLELLRPMGTIVTMMGITECGKRVAVHVYGIKPYFYMRKVDTDTICGSRCPRELAEKLANVVRSSVNEVANAKRFCTPVTRTVSADCFEVDVVQRKDIYYYGTGHDEFYRVKSQSGKFITLLCDNFYPSIIKYEGNIDAITRMVLDNNGFSTFGWYSFKVGNNGEKVQVRAPCHHCTSCDIEINCTVDNLIGYPEDDAWPDYKLLCFDIECKSGGVNECAFPCATNEEDVVIQISCLLYSINTKQLEHALLFALGACDLPQTFKETFQSSYNILPIVLEFDSEFELLLAFMTFIKQYAPEFVTGYNIVNFDWAFIVTKLTTVYNMRLDGYGVVNQKGMFKVWDAGTNRFQKKGKFKATGMITLDMYSIATEKLKLQSYKLDVVAEAALGERKKELSYKEIPSHFAAGPEKRGIIGEYCLQDSLLVGKLFFKYIPHLELSAIAKLAGILLSKAIFDGQQIRVYTCLLRLARSHGFILPEKNKKFAETVSLTCEEDQTEICEHDSPQEPIHNIKQSSLCHSNSGRTIGYQGAKVLDPISGFHVDPVMVFDFASLYPSIIQAHNLCFTTLVHDDTNLSNLRPQDDYLEINVQGKLLRFVKPHIRESLLAILLKDWLAMRKAIRAKIPESCDEIAVLLDKQQAAIKVVCNSVYGFCGVSNGLLPCIDVAATVTTIGRNMLLTVRDYIHKQWGTRDALLREFPNLSNFMRPEDYSVSVIYGDTDSVFIKFKGVDIHGLVTTGDDMAKRVSSDLFPKPIKLECEKTFNKLLLITKKKYMGTIHGGRMLMKGVDIVRKNNCRFINTYAKKLSDLLFLDDTVAKAAATVAEKPPSFWATSPLPEGLNSFGGVLAEAYTRMMINNITEVEDFAMSAELSRPPDAYTNKRIPHLTVYYKLAMRSEQLPVVKDRISYVIAAATPEVVRDSARVAEFRGELDLCHQNSNTSCPGDSVMTNKETYVRHSPRNKLLISDMAEDPKYLLANNIPLNTDYYLSHLLGTLCVTFKALFGNDVKITETVLRRFIPETFTEDCSYTERVSSEMFTTIRSGIGLQVNEEEETRRKLNIAFRILTATPHRY</sequence>
<reference key="1">
    <citation type="journal article" date="2000" name="J. Virol.">
        <title>The genome of a very virulent Marek's disease virus.</title>
        <authorList>
            <person name="Tulman E.R."/>
            <person name="Afonso C.L."/>
            <person name="Lu Z."/>
            <person name="Zsak L."/>
            <person name="Rock D.L."/>
            <person name="Kutish G.F."/>
        </authorList>
    </citation>
    <scope>NUCLEOTIDE SEQUENCE [LARGE SCALE GENOMIC DNA]</scope>
</reference>
<accession>Q9E6N9</accession>
<dbReference type="EC" id="2.7.7.7"/>
<dbReference type="EC" id="3.1.26.4"/>
<dbReference type="EMBL" id="AF243438">
    <property type="protein sequence ID" value="AAG14223.1"/>
    <property type="molecule type" value="Genomic_DNA"/>
</dbReference>
<dbReference type="RefSeq" id="YP_001033959.1">
    <property type="nucleotide sequence ID" value="NC_002229.3"/>
</dbReference>
<dbReference type="SMR" id="Q9E6N9"/>
<dbReference type="GeneID" id="4811504"/>
<dbReference type="KEGG" id="vg:4811504"/>
<dbReference type="Proteomes" id="UP000008072">
    <property type="component" value="Segment"/>
</dbReference>
<dbReference type="GO" id="GO:0042025">
    <property type="term" value="C:host cell nucleus"/>
    <property type="evidence" value="ECO:0007669"/>
    <property type="project" value="UniProtKB-SubCell"/>
</dbReference>
<dbReference type="GO" id="GO:0003677">
    <property type="term" value="F:DNA binding"/>
    <property type="evidence" value="ECO:0007669"/>
    <property type="project" value="UniProtKB-KW"/>
</dbReference>
<dbReference type="GO" id="GO:0003887">
    <property type="term" value="F:DNA-directed DNA polymerase activity"/>
    <property type="evidence" value="ECO:0007669"/>
    <property type="project" value="UniProtKB-KW"/>
</dbReference>
<dbReference type="GO" id="GO:0000166">
    <property type="term" value="F:nucleotide binding"/>
    <property type="evidence" value="ECO:0007669"/>
    <property type="project" value="InterPro"/>
</dbReference>
<dbReference type="GO" id="GO:0004523">
    <property type="term" value="F:RNA-DNA hybrid ribonuclease activity"/>
    <property type="evidence" value="ECO:0007669"/>
    <property type="project" value="UniProtKB-EC"/>
</dbReference>
<dbReference type="GO" id="GO:0006261">
    <property type="term" value="P:DNA-templated DNA replication"/>
    <property type="evidence" value="ECO:0007669"/>
    <property type="project" value="TreeGrafter"/>
</dbReference>
<dbReference type="GO" id="GO:0039693">
    <property type="term" value="P:viral DNA genome replication"/>
    <property type="evidence" value="ECO:0007669"/>
    <property type="project" value="UniProtKB-KW"/>
</dbReference>
<dbReference type="Gene3D" id="1.10.132.60">
    <property type="entry name" value="DNA polymerase family B, C-terminal domain"/>
    <property type="match status" value="1"/>
</dbReference>
<dbReference type="Gene3D" id="3.30.342.10">
    <property type="entry name" value="DNA Polymerase, chain B, domain 1"/>
    <property type="match status" value="1"/>
</dbReference>
<dbReference type="Gene3D" id="1.10.287.690">
    <property type="entry name" value="Helix hairpin bin"/>
    <property type="match status" value="1"/>
</dbReference>
<dbReference type="Gene3D" id="3.90.1600.10">
    <property type="entry name" value="Palm domain of DNA polymerase"/>
    <property type="match status" value="1"/>
</dbReference>
<dbReference type="Gene3D" id="3.30.420.10">
    <property type="entry name" value="Ribonuclease H-like superfamily/Ribonuclease H"/>
    <property type="match status" value="1"/>
</dbReference>
<dbReference type="InterPro" id="IPR006172">
    <property type="entry name" value="DNA-dir_DNA_pol_B"/>
</dbReference>
<dbReference type="InterPro" id="IPR017964">
    <property type="entry name" value="DNA-dir_DNA_pol_B_CS"/>
</dbReference>
<dbReference type="InterPro" id="IPR006133">
    <property type="entry name" value="DNA-dir_DNA_pol_B_exonuc"/>
</dbReference>
<dbReference type="InterPro" id="IPR006134">
    <property type="entry name" value="DNA-dir_DNA_pol_B_multi_dom"/>
</dbReference>
<dbReference type="InterPro" id="IPR043502">
    <property type="entry name" value="DNA/RNA_pol_sf"/>
</dbReference>
<dbReference type="InterPro" id="IPR042087">
    <property type="entry name" value="DNA_pol_B_thumb"/>
</dbReference>
<dbReference type="InterPro" id="IPR023211">
    <property type="entry name" value="DNA_pol_palm_dom_sf"/>
</dbReference>
<dbReference type="InterPro" id="IPR050240">
    <property type="entry name" value="DNA_pol_type-B"/>
</dbReference>
<dbReference type="InterPro" id="IPR021639">
    <property type="entry name" value="DNAPolymera_Pol_C"/>
</dbReference>
<dbReference type="InterPro" id="IPR012337">
    <property type="entry name" value="RNaseH-like_sf"/>
</dbReference>
<dbReference type="InterPro" id="IPR036397">
    <property type="entry name" value="RNaseH_sf"/>
</dbReference>
<dbReference type="PANTHER" id="PTHR10322">
    <property type="entry name" value="DNA POLYMERASE CATALYTIC SUBUNIT"/>
    <property type="match status" value="1"/>
</dbReference>
<dbReference type="PANTHER" id="PTHR10322:SF23">
    <property type="entry name" value="DNA POLYMERASE DELTA CATALYTIC SUBUNIT"/>
    <property type="match status" value="1"/>
</dbReference>
<dbReference type="Pfam" id="PF00136">
    <property type="entry name" value="DNA_pol_B"/>
    <property type="match status" value="1"/>
</dbReference>
<dbReference type="Pfam" id="PF03104">
    <property type="entry name" value="DNA_pol_B_exo1"/>
    <property type="match status" value="1"/>
</dbReference>
<dbReference type="Pfam" id="PF11590">
    <property type="entry name" value="DNAPolymera_Pol"/>
    <property type="match status" value="1"/>
</dbReference>
<dbReference type="PRINTS" id="PR00106">
    <property type="entry name" value="DNAPOLB"/>
</dbReference>
<dbReference type="SMART" id="SM00486">
    <property type="entry name" value="POLBc"/>
    <property type="match status" value="1"/>
</dbReference>
<dbReference type="SUPFAM" id="SSF56672">
    <property type="entry name" value="DNA/RNA polymerases"/>
    <property type="match status" value="1"/>
</dbReference>
<dbReference type="SUPFAM" id="SSF53098">
    <property type="entry name" value="Ribonuclease H-like"/>
    <property type="match status" value="1"/>
</dbReference>
<dbReference type="PROSITE" id="PS00116">
    <property type="entry name" value="DNA_POLYMERASE_B"/>
    <property type="match status" value="1"/>
</dbReference>
<keyword id="KW-0235">DNA replication</keyword>
<keyword id="KW-0238">DNA-binding</keyword>
<keyword id="KW-0239">DNA-directed DNA polymerase</keyword>
<keyword id="KW-0255">Endonuclease</keyword>
<keyword id="KW-1048">Host nucleus</keyword>
<keyword id="KW-0378">Hydrolase</keyword>
<keyword id="KW-0511">Multifunctional enzyme</keyword>
<keyword id="KW-0540">Nuclease</keyword>
<keyword id="KW-0548">Nucleotidyltransferase</keyword>
<keyword id="KW-1185">Reference proteome</keyword>
<keyword id="KW-0808">Transferase</keyword>
<keyword id="KW-1194">Viral DNA replication</keyword>
<proteinExistence type="inferred from homology"/>
<gene>
    <name type="primary">MDV043</name>
</gene>
<comment type="function">
    <text evidence="1">Replicates viral genomic DNA. The replication complex is composed of six viral proteins: the DNA polymerase, processivity factor, primase, primase-associated factor, helicase, and ssDNA-binding protein. Additionally, the polymerase contains an intrinsic ribonuclease H (RNase H) activity that specifically degrades RNA/DNA heteroduplexes or duplex DNA substrates in the 5' to 3' direction. Therefore, it can catalyze the excision of the RNA primers that initiate the synthesis of Okazaki fragments at a replication fork during viral DNA replication (By similarity).</text>
</comment>
<comment type="catalytic activity">
    <reaction>
        <text>DNA(n) + a 2'-deoxyribonucleoside 5'-triphosphate = DNA(n+1) + diphosphate</text>
        <dbReference type="Rhea" id="RHEA:22508"/>
        <dbReference type="Rhea" id="RHEA-COMP:17339"/>
        <dbReference type="Rhea" id="RHEA-COMP:17340"/>
        <dbReference type="ChEBI" id="CHEBI:33019"/>
        <dbReference type="ChEBI" id="CHEBI:61560"/>
        <dbReference type="ChEBI" id="CHEBI:173112"/>
        <dbReference type="EC" id="2.7.7.7"/>
    </reaction>
</comment>
<comment type="catalytic activity">
    <reaction>
        <text>Endonucleolytic cleavage to 5'-phosphomonoester.</text>
        <dbReference type="EC" id="3.1.26.4"/>
    </reaction>
</comment>
<comment type="subunit">
    <text evidence="1">Forms a complex with the ssDNA-binding protein, the DNA polymerase processivity factor, and the alkaline exonuclease. Interacts with the helicase-primase complex composed of the primase, the helicase and the primase-associated factor; this interaction may coordinate leading and lagging strand DNA synthesis at the replication fork (By similarity).</text>
</comment>
<comment type="subcellular location">
    <subcellularLocation>
        <location evidence="1">Host nucleus</location>
    </subcellularLocation>
    <text evidence="1">The protein is present at discrete sites in nuclei, called replication compartments where viral DNA replication occurs.</text>
</comment>
<comment type="similarity">
    <text evidence="2">Belongs to the DNA polymerase type-B family.</text>
</comment>
<organismHost>
    <name type="scientific">Gallus gallus</name>
    <name type="common">Chicken</name>
    <dbReference type="NCBI Taxonomy" id="9031"/>
</organismHost>
<protein>
    <recommendedName>
        <fullName>DNA polymerase catalytic subunit</fullName>
        <ecNumber>2.7.7.7</ecNumber>
        <ecNumber>3.1.26.4</ecNumber>
    </recommendedName>
</protein>
<evidence type="ECO:0000250" key="1"/>
<evidence type="ECO:0000305" key="2"/>